<organism>
    <name type="scientific">Campylobacter lari (strain RM2100 / D67 / ATCC BAA-1060)</name>
    <dbReference type="NCBI Taxonomy" id="306263"/>
    <lineage>
        <taxon>Bacteria</taxon>
        <taxon>Pseudomonadati</taxon>
        <taxon>Campylobacterota</taxon>
        <taxon>Epsilonproteobacteria</taxon>
        <taxon>Campylobacterales</taxon>
        <taxon>Campylobacteraceae</taxon>
        <taxon>Campylobacter</taxon>
    </lineage>
</organism>
<sequence length="311" mass="34400">MASYLDFEKNIQQIDEDLANAKIKGDDEAVKILEKNLEKETQKVYKNLSDYQRLQLARHPDRPYALDYIQAILSDAYEIHGDRAFRDDPAIVCYAGYIGGKKIIVIGEQKGRGTKDKLHRNFGMPHPEGYRKALRVAKMAEKFNIPVLFLVDTPGAYPGVGAEERGQSEAIARNLYELSALKTITIAVVIGEGGSGGALAIGVADKLAMMKNSVFSVISPEGCAAILWNDPSKSEAATKAMKVTADDLKTQGLIDDVIEEPMSGAHRDKENAIKNLSDYVLKAIEELEQYDKRELAALRMQKIFKFGAFAE</sequence>
<feature type="chain" id="PRO_1000148735" description="Acetyl-coenzyme A carboxylase carboxyl transferase subunit alpha">
    <location>
        <begin position="1"/>
        <end position="311"/>
    </location>
</feature>
<feature type="domain" description="CoA carboxyltransferase C-terminal" evidence="2">
    <location>
        <begin position="36"/>
        <end position="286"/>
    </location>
</feature>
<evidence type="ECO:0000255" key="1">
    <source>
        <dbReference type="HAMAP-Rule" id="MF_00823"/>
    </source>
</evidence>
<evidence type="ECO:0000255" key="2">
    <source>
        <dbReference type="PROSITE-ProRule" id="PRU01137"/>
    </source>
</evidence>
<protein>
    <recommendedName>
        <fullName evidence="1">Acetyl-coenzyme A carboxylase carboxyl transferase subunit alpha</fullName>
        <shortName evidence="1">ACCase subunit alpha</shortName>
        <shortName evidence="1">Acetyl-CoA carboxylase carboxyltransferase subunit alpha</shortName>
        <ecNumber evidence="1">2.1.3.15</ecNumber>
    </recommendedName>
</protein>
<keyword id="KW-0067">ATP-binding</keyword>
<keyword id="KW-0963">Cytoplasm</keyword>
<keyword id="KW-0275">Fatty acid biosynthesis</keyword>
<keyword id="KW-0276">Fatty acid metabolism</keyword>
<keyword id="KW-0444">Lipid biosynthesis</keyword>
<keyword id="KW-0443">Lipid metabolism</keyword>
<keyword id="KW-0547">Nucleotide-binding</keyword>
<keyword id="KW-1185">Reference proteome</keyword>
<keyword id="KW-0808">Transferase</keyword>
<proteinExistence type="inferred from homology"/>
<dbReference type="EC" id="2.1.3.15" evidence="1"/>
<dbReference type="EMBL" id="CP000932">
    <property type="protein sequence ID" value="ACM63650.1"/>
    <property type="molecule type" value="Genomic_DNA"/>
</dbReference>
<dbReference type="RefSeq" id="WP_012661034.1">
    <property type="nucleotide sequence ID" value="NC_012039.1"/>
</dbReference>
<dbReference type="SMR" id="B9KF15"/>
<dbReference type="STRING" id="306263.Cla_0287"/>
<dbReference type="KEGG" id="cla:CLA_0287"/>
<dbReference type="PATRIC" id="fig|306263.5.peg.285"/>
<dbReference type="eggNOG" id="COG0825">
    <property type="taxonomic scope" value="Bacteria"/>
</dbReference>
<dbReference type="HOGENOM" id="CLU_015486_0_2_7"/>
<dbReference type="UniPathway" id="UPA00655">
    <property type="reaction ID" value="UER00711"/>
</dbReference>
<dbReference type="Proteomes" id="UP000007727">
    <property type="component" value="Chromosome"/>
</dbReference>
<dbReference type="GO" id="GO:0009317">
    <property type="term" value="C:acetyl-CoA carboxylase complex"/>
    <property type="evidence" value="ECO:0007669"/>
    <property type="project" value="InterPro"/>
</dbReference>
<dbReference type="GO" id="GO:0003989">
    <property type="term" value="F:acetyl-CoA carboxylase activity"/>
    <property type="evidence" value="ECO:0007669"/>
    <property type="project" value="InterPro"/>
</dbReference>
<dbReference type="GO" id="GO:0005524">
    <property type="term" value="F:ATP binding"/>
    <property type="evidence" value="ECO:0007669"/>
    <property type="project" value="UniProtKB-KW"/>
</dbReference>
<dbReference type="GO" id="GO:0016743">
    <property type="term" value="F:carboxyl- or carbamoyltransferase activity"/>
    <property type="evidence" value="ECO:0007669"/>
    <property type="project" value="UniProtKB-UniRule"/>
</dbReference>
<dbReference type="GO" id="GO:0006633">
    <property type="term" value="P:fatty acid biosynthetic process"/>
    <property type="evidence" value="ECO:0007669"/>
    <property type="project" value="UniProtKB-KW"/>
</dbReference>
<dbReference type="GO" id="GO:2001295">
    <property type="term" value="P:malonyl-CoA biosynthetic process"/>
    <property type="evidence" value="ECO:0007669"/>
    <property type="project" value="UniProtKB-UniRule"/>
</dbReference>
<dbReference type="Gene3D" id="3.90.226.10">
    <property type="entry name" value="2-enoyl-CoA Hydratase, Chain A, domain 1"/>
    <property type="match status" value="1"/>
</dbReference>
<dbReference type="HAMAP" id="MF_00823">
    <property type="entry name" value="AcetylCoA_CT_alpha"/>
    <property type="match status" value="1"/>
</dbReference>
<dbReference type="InterPro" id="IPR001095">
    <property type="entry name" value="Acetyl_CoA_COase_a_su"/>
</dbReference>
<dbReference type="InterPro" id="IPR029045">
    <property type="entry name" value="ClpP/crotonase-like_dom_sf"/>
</dbReference>
<dbReference type="InterPro" id="IPR011763">
    <property type="entry name" value="COA_CT_C"/>
</dbReference>
<dbReference type="NCBIfam" id="TIGR00513">
    <property type="entry name" value="accA"/>
    <property type="match status" value="1"/>
</dbReference>
<dbReference type="NCBIfam" id="NF041504">
    <property type="entry name" value="AccA_sub"/>
    <property type="match status" value="1"/>
</dbReference>
<dbReference type="NCBIfam" id="NF004344">
    <property type="entry name" value="PRK05724.1"/>
    <property type="match status" value="1"/>
</dbReference>
<dbReference type="PANTHER" id="PTHR42853">
    <property type="entry name" value="ACETYL-COENZYME A CARBOXYLASE CARBOXYL TRANSFERASE SUBUNIT ALPHA"/>
    <property type="match status" value="1"/>
</dbReference>
<dbReference type="PANTHER" id="PTHR42853:SF3">
    <property type="entry name" value="ACETYL-COENZYME A CARBOXYLASE CARBOXYL TRANSFERASE SUBUNIT ALPHA, CHLOROPLASTIC"/>
    <property type="match status" value="1"/>
</dbReference>
<dbReference type="Pfam" id="PF03255">
    <property type="entry name" value="ACCA"/>
    <property type="match status" value="1"/>
</dbReference>
<dbReference type="PRINTS" id="PR01069">
    <property type="entry name" value="ACCCTRFRASEA"/>
</dbReference>
<dbReference type="SUPFAM" id="SSF52096">
    <property type="entry name" value="ClpP/crotonase"/>
    <property type="match status" value="1"/>
</dbReference>
<dbReference type="PROSITE" id="PS50989">
    <property type="entry name" value="COA_CT_CTER"/>
    <property type="match status" value="1"/>
</dbReference>
<accession>B9KF15</accession>
<name>ACCA_CAMLR</name>
<reference key="1">
    <citation type="journal article" date="2008" name="Foodborne Pathog. Dis.">
        <title>The complete genome sequence and analysis of the human pathogen Campylobacter lari.</title>
        <authorList>
            <person name="Miller W.G."/>
            <person name="Wang G."/>
            <person name="Binnewies T.T."/>
            <person name="Parker C.T."/>
        </authorList>
    </citation>
    <scope>NUCLEOTIDE SEQUENCE [LARGE SCALE GENOMIC DNA]</scope>
    <source>
        <strain>RM2100 / D67 / ATCC BAA-1060</strain>
    </source>
</reference>
<gene>
    <name evidence="1" type="primary">accA</name>
    <name type="ordered locus">Cla_0287</name>
</gene>
<comment type="function">
    <text evidence="1">Component of the acetyl coenzyme A carboxylase (ACC) complex. First, biotin carboxylase catalyzes the carboxylation of biotin on its carrier protein (BCCP) and then the CO(2) group is transferred by the carboxyltransferase to acetyl-CoA to form malonyl-CoA.</text>
</comment>
<comment type="catalytic activity">
    <reaction evidence="1">
        <text>N(6)-carboxybiotinyl-L-lysyl-[protein] + acetyl-CoA = N(6)-biotinyl-L-lysyl-[protein] + malonyl-CoA</text>
        <dbReference type="Rhea" id="RHEA:54728"/>
        <dbReference type="Rhea" id="RHEA-COMP:10505"/>
        <dbReference type="Rhea" id="RHEA-COMP:10506"/>
        <dbReference type="ChEBI" id="CHEBI:57288"/>
        <dbReference type="ChEBI" id="CHEBI:57384"/>
        <dbReference type="ChEBI" id="CHEBI:83144"/>
        <dbReference type="ChEBI" id="CHEBI:83145"/>
        <dbReference type="EC" id="2.1.3.15"/>
    </reaction>
</comment>
<comment type="pathway">
    <text evidence="1">Lipid metabolism; malonyl-CoA biosynthesis; malonyl-CoA from acetyl-CoA: step 1/1.</text>
</comment>
<comment type="subunit">
    <text evidence="1">Acetyl-CoA carboxylase is a heterohexamer composed of biotin carboxyl carrier protein (AccB), biotin carboxylase (AccC) and two subunits each of ACCase subunit alpha (AccA) and ACCase subunit beta (AccD).</text>
</comment>
<comment type="subcellular location">
    <subcellularLocation>
        <location evidence="1">Cytoplasm</location>
    </subcellularLocation>
</comment>
<comment type="similarity">
    <text evidence="1">Belongs to the AccA family.</text>
</comment>